<dbReference type="EC" id="5.6.1.7" evidence="1"/>
<dbReference type="EMBL" id="CP001635">
    <property type="protein sequence ID" value="ACS17769.1"/>
    <property type="molecule type" value="Genomic_DNA"/>
</dbReference>
<dbReference type="SMR" id="C5CPP8"/>
<dbReference type="STRING" id="543728.Vapar_1118"/>
<dbReference type="KEGG" id="vap:Vapar_1118"/>
<dbReference type="eggNOG" id="COG0459">
    <property type="taxonomic scope" value="Bacteria"/>
</dbReference>
<dbReference type="HOGENOM" id="CLU_016503_3_0_4"/>
<dbReference type="OrthoDB" id="9766614at2"/>
<dbReference type="GO" id="GO:0005737">
    <property type="term" value="C:cytoplasm"/>
    <property type="evidence" value="ECO:0007669"/>
    <property type="project" value="UniProtKB-SubCell"/>
</dbReference>
<dbReference type="GO" id="GO:0005524">
    <property type="term" value="F:ATP binding"/>
    <property type="evidence" value="ECO:0007669"/>
    <property type="project" value="UniProtKB-UniRule"/>
</dbReference>
<dbReference type="GO" id="GO:0140662">
    <property type="term" value="F:ATP-dependent protein folding chaperone"/>
    <property type="evidence" value="ECO:0007669"/>
    <property type="project" value="InterPro"/>
</dbReference>
<dbReference type="GO" id="GO:0016853">
    <property type="term" value="F:isomerase activity"/>
    <property type="evidence" value="ECO:0007669"/>
    <property type="project" value="UniProtKB-KW"/>
</dbReference>
<dbReference type="GO" id="GO:0051082">
    <property type="term" value="F:unfolded protein binding"/>
    <property type="evidence" value="ECO:0007669"/>
    <property type="project" value="UniProtKB-UniRule"/>
</dbReference>
<dbReference type="GO" id="GO:0042026">
    <property type="term" value="P:protein refolding"/>
    <property type="evidence" value="ECO:0007669"/>
    <property type="project" value="UniProtKB-UniRule"/>
</dbReference>
<dbReference type="CDD" id="cd03344">
    <property type="entry name" value="GroEL"/>
    <property type="match status" value="1"/>
</dbReference>
<dbReference type="FunFam" id="1.10.560.10:FF:000001">
    <property type="entry name" value="60 kDa chaperonin"/>
    <property type="match status" value="1"/>
</dbReference>
<dbReference type="FunFam" id="3.50.7.10:FF:000001">
    <property type="entry name" value="60 kDa chaperonin"/>
    <property type="match status" value="1"/>
</dbReference>
<dbReference type="Gene3D" id="3.50.7.10">
    <property type="entry name" value="GroEL"/>
    <property type="match status" value="1"/>
</dbReference>
<dbReference type="Gene3D" id="1.10.560.10">
    <property type="entry name" value="GroEL-like equatorial domain"/>
    <property type="match status" value="1"/>
</dbReference>
<dbReference type="Gene3D" id="3.30.260.10">
    <property type="entry name" value="TCP-1-like chaperonin intermediate domain"/>
    <property type="match status" value="1"/>
</dbReference>
<dbReference type="HAMAP" id="MF_00600">
    <property type="entry name" value="CH60"/>
    <property type="match status" value="1"/>
</dbReference>
<dbReference type="InterPro" id="IPR018370">
    <property type="entry name" value="Chaperonin_Cpn60_CS"/>
</dbReference>
<dbReference type="InterPro" id="IPR001844">
    <property type="entry name" value="Cpn60/GroEL"/>
</dbReference>
<dbReference type="InterPro" id="IPR002423">
    <property type="entry name" value="Cpn60/GroEL/TCP-1"/>
</dbReference>
<dbReference type="InterPro" id="IPR027409">
    <property type="entry name" value="GroEL-like_apical_dom_sf"/>
</dbReference>
<dbReference type="InterPro" id="IPR027413">
    <property type="entry name" value="GROEL-like_equatorial_sf"/>
</dbReference>
<dbReference type="InterPro" id="IPR027410">
    <property type="entry name" value="TCP-1-like_intermed_sf"/>
</dbReference>
<dbReference type="NCBIfam" id="TIGR02348">
    <property type="entry name" value="GroEL"/>
    <property type="match status" value="1"/>
</dbReference>
<dbReference type="NCBIfam" id="NF000592">
    <property type="entry name" value="PRK00013.1"/>
    <property type="match status" value="1"/>
</dbReference>
<dbReference type="NCBIfam" id="NF009487">
    <property type="entry name" value="PRK12849.1"/>
    <property type="match status" value="1"/>
</dbReference>
<dbReference type="NCBIfam" id="NF009488">
    <property type="entry name" value="PRK12850.1"/>
    <property type="match status" value="1"/>
</dbReference>
<dbReference type="NCBIfam" id="NF009489">
    <property type="entry name" value="PRK12851.1"/>
    <property type="match status" value="1"/>
</dbReference>
<dbReference type="PANTHER" id="PTHR45633">
    <property type="entry name" value="60 KDA HEAT SHOCK PROTEIN, MITOCHONDRIAL"/>
    <property type="match status" value="1"/>
</dbReference>
<dbReference type="Pfam" id="PF00118">
    <property type="entry name" value="Cpn60_TCP1"/>
    <property type="match status" value="1"/>
</dbReference>
<dbReference type="PRINTS" id="PR00298">
    <property type="entry name" value="CHAPERONIN60"/>
</dbReference>
<dbReference type="SUPFAM" id="SSF52029">
    <property type="entry name" value="GroEL apical domain-like"/>
    <property type="match status" value="1"/>
</dbReference>
<dbReference type="SUPFAM" id="SSF48592">
    <property type="entry name" value="GroEL equatorial domain-like"/>
    <property type="match status" value="1"/>
</dbReference>
<dbReference type="SUPFAM" id="SSF54849">
    <property type="entry name" value="GroEL-intermediate domain like"/>
    <property type="match status" value="1"/>
</dbReference>
<dbReference type="PROSITE" id="PS00296">
    <property type="entry name" value="CHAPERONINS_CPN60"/>
    <property type="match status" value="1"/>
</dbReference>
<name>CH60_VARPS</name>
<keyword id="KW-0067">ATP-binding</keyword>
<keyword id="KW-0143">Chaperone</keyword>
<keyword id="KW-0963">Cytoplasm</keyword>
<keyword id="KW-0413">Isomerase</keyword>
<keyword id="KW-0547">Nucleotide-binding</keyword>
<feature type="chain" id="PRO_1000212212" description="Chaperonin GroEL">
    <location>
        <begin position="1"/>
        <end position="550"/>
    </location>
</feature>
<feature type="binding site" evidence="1">
    <location>
        <begin position="30"/>
        <end position="33"/>
    </location>
    <ligand>
        <name>ATP</name>
        <dbReference type="ChEBI" id="CHEBI:30616"/>
    </ligand>
</feature>
<feature type="binding site" evidence="1">
    <location>
        <position position="51"/>
    </location>
    <ligand>
        <name>ATP</name>
        <dbReference type="ChEBI" id="CHEBI:30616"/>
    </ligand>
</feature>
<feature type="binding site" evidence="1">
    <location>
        <begin position="87"/>
        <end position="91"/>
    </location>
    <ligand>
        <name>ATP</name>
        <dbReference type="ChEBI" id="CHEBI:30616"/>
    </ligand>
</feature>
<feature type="binding site" evidence="1">
    <location>
        <position position="415"/>
    </location>
    <ligand>
        <name>ATP</name>
        <dbReference type="ChEBI" id="CHEBI:30616"/>
    </ligand>
</feature>
<feature type="binding site" evidence="1">
    <location>
        <begin position="480"/>
        <end position="482"/>
    </location>
    <ligand>
        <name>ATP</name>
        <dbReference type="ChEBI" id="CHEBI:30616"/>
    </ligand>
</feature>
<feature type="binding site" evidence="1">
    <location>
        <position position="496"/>
    </location>
    <ligand>
        <name>ATP</name>
        <dbReference type="ChEBI" id="CHEBI:30616"/>
    </ligand>
</feature>
<gene>
    <name evidence="1" type="primary">groEL</name>
    <name evidence="1" type="synonym">groL</name>
    <name type="ordered locus">Vapar_1118</name>
</gene>
<accession>C5CPP8</accession>
<evidence type="ECO:0000255" key="1">
    <source>
        <dbReference type="HAMAP-Rule" id="MF_00600"/>
    </source>
</evidence>
<reference key="1">
    <citation type="journal article" date="2011" name="J. Bacteriol.">
        <title>Complete genome sequence of the metabolically versatile plant growth-promoting endophyte, Variovorax paradoxus S110.</title>
        <authorList>
            <person name="Han J.I."/>
            <person name="Choi H.K."/>
            <person name="Lee S.W."/>
            <person name="Orwin P.M."/>
            <person name="Kim J."/>
            <person name="Laroe S.L."/>
            <person name="Kim T.G."/>
            <person name="O'Neil J."/>
            <person name="Leadbetter J.R."/>
            <person name="Lee S.Y."/>
            <person name="Hur C.G."/>
            <person name="Spain J.C."/>
            <person name="Ovchinnikova G."/>
            <person name="Goodwin L."/>
            <person name="Han C."/>
        </authorList>
    </citation>
    <scope>NUCLEOTIDE SEQUENCE [LARGE SCALE GENOMIC DNA]</scope>
    <source>
        <strain>S110</strain>
    </source>
</reference>
<sequence length="550" mass="57421">MAAKDVVFGGEARARMVEGVNILANAVKVTLGPKGRNVVLERSFGAPTVTKDGVSVAKEIELKDKLQNMGAQLVKEVASKTSDNAGDGTTTATVLAQAIVREGFKYVAAGINPMDLKRGIDKAVTALVEELKKASKPTTTSKEIAQVGSISANSDETIGKLIADAMDKVGKEGVITVEDGKSLDSELDVVEGMQFDRGYLSPYFINNPEKQSALLDNPFVLLFDKKISNIRDLLPTLEQVAKAGRPLLIIAEEVEGEALATLVVNTIRGILKVVAVKAPGFGDRRKAMLEDIAILTGGKVIAEEVGLTLEKVTLADLGQAKRIEVGKENTIIIDGSGAAADIEARVKQVRVQIEEATSDYDREKLQERVAKLAGGVAVIKVGAATEVEMKEKKARVEDALHATRAAVEEGVVAGGGVALLRAKQAVGDKVKGDNADQDAGIKLVLKAIEAPLREIVNNAGGEASVVVNAVLAGKGNYGFNAANDTYGDMLELGILDPTKVTRTALQNAASVASLLLTTEAMVADAPKEEAGAGGGMPDMGGMGGMGGMGM</sequence>
<protein>
    <recommendedName>
        <fullName evidence="1">Chaperonin GroEL</fullName>
        <ecNumber evidence="1">5.6.1.7</ecNumber>
    </recommendedName>
    <alternativeName>
        <fullName evidence="1">60 kDa chaperonin</fullName>
    </alternativeName>
    <alternativeName>
        <fullName evidence="1">Chaperonin-60</fullName>
        <shortName evidence="1">Cpn60</shortName>
    </alternativeName>
</protein>
<proteinExistence type="inferred from homology"/>
<comment type="function">
    <text evidence="1">Together with its co-chaperonin GroES, plays an essential role in assisting protein folding. The GroEL-GroES system forms a nano-cage that allows encapsulation of the non-native substrate proteins and provides a physical environment optimized to promote and accelerate protein folding.</text>
</comment>
<comment type="catalytic activity">
    <reaction evidence="1">
        <text>ATP + H2O + a folded polypeptide = ADP + phosphate + an unfolded polypeptide.</text>
        <dbReference type="EC" id="5.6.1.7"/>
    </reaction>
</comment>
<comment type="subunit">
    <text evidence="1">Forms a cylinder of 14 subunits composed of two heptameric rings stacked back-to-back. Interacts with the co-chaperonin GroES.</text>
</comment>
<comment type="subcellular location">
    <subcellularLocation>
        <location evidence="1">Cytoplasm</location>
    </subcellularLocation>
</comment>
<comment type="similarity">
    <text evidence="1">Belongs to the chaperonin (HSP60) family.</text>
</comment>
<organism>
    <name type="scientific">Variovorax paradoxus (strain S110)</name>
    <dbReference type="NCBI Taxonomy" id="543728"/>
    <lineage>
        <taxon>Bacteria</taxon>
        <taxon>Pseudomonadati</taxon>
        <taxon>Pseudomonadota</taxon>
        <taxon>Betaproteobacteria</taxon>
        <taxon>Burkholderiales</taxon>
        <taxon>Comamonadaceae</taxon>
        <taxon>Variovorax</taxon>
    </lineage>
</organism>